<organism>
    <name type="scientific">Vibrio vulnificus (strain CMCP6)</name>
    <dbReference type="NCBI Taxonomy" id="216895"/>
    <lineage>
        <taxon>Bacteria</taxon>
        <taxon>Pseudomonadati</taxon>
        <taxon>Pseudomonadota</taxon>
        <taxon>Gammaproteobacteria</taxon>
        <taxon>Vibrionales</taxon>
        <taxon>Vibrionaceae</taxon>
        <taxon>Vibrio</taxon>
    </lineage>
</organism>
<reference key="1">
    <citation type="submission" date="2002-12" db="EMBL/GenBank/DDBJ databases">
        <title>Complete genome sequence of Vibrio vulnificus CMCP6.</title>
        <authorList>
            <person name="Rhee J.H."/>
            <person name="Kim S.Y."/>
            <person name="Chung S.S."/>
            <person name="Kim J.J."/>
            <person name="Moon Y.H."/>
            <person name="Jeong H."/>
            <person name="Choy H.E."/>
        </authorList>
    </citation>
    <scope>NUCLEOTIDE SEQUENCE [LARGE SCALE GENOMIC DNA]</scope>
    <source>
        <strain>CMCP6</strain>
    </source>
</reference>
<sequence length="429" mass="45830">MNVLIIGSGGREHALGWKAAQNPNVETIFVAPGNAGTALEPKLENVNIAVEDIAGLVAFAKEKAIELTIVGPEVPLVLGVVDAFYEAGLPIFGPTQAAAQLEGSKAFTKDFLARHQIPTAAYANFTDIEPALAYVREQGAPIVVKADGLAAGKGVIVAMTLEEAEEAIKDMLAGNAFGEAGSRVVIEEFLDGEEASFIVMVDGENVLPMATSQDHKRVGDKDTGPNTGGMGAYSPAPVVTPEIHNRVMQEVIFPTVRGMAAEGNPYTGFLYAGLMIDKDGTPKVIEYNCRFGDPETQPIMMRMESDLVELCLAAIDKKLDQVESKWDPRASIGIVLAAGGYPAAYNKGDVISGLPQVEIEGEKVFHAGTENKEGDIVTNGGRVLCATALGNSVSEAQQRAYELAKQIRWEGMFHRNDIGYRAIAREQQK</sequence>
<gene>
    <name evidence="2" type="primary">purD</name>
    <name type="ordered locus">VV1_1226</name>
</gene>
<feature type="chain" id="PRO_0000151499" description="Phosphoribosylamine--glycine ligase">
    <location>
        <begin position="1"/>
        <end position="429"/>
    </location>
</feature>
<feature type="domain" description="ATP-grasp" evidence="2">
    <location>
        <begin position="109"/>
        <end position="316"/>
    </location>
</feature>
<feature type="region of interest" description="Disordered" evidence="3">
    <location>
        <begin position="212"/>
        <end position="234"/>
    </location>
</feature>
<feature type="compositionally biased region" description="Basic and acidic residues" evidence="3">
    <location>
        <begin position="213"/>
        <end position="223"/>
    </location>
</feature>
<feature type="binding site" evidence="2">
    <location>
        <begin position="135"/>
        <end position="196"/>
    </location>
    <ligand>
        <name>ATP</name>
        <dbReference type="ChEBI" id="CHEBI:30616"/>
    </ligand>
</feature>
<feature type="binding site" evidence="2">
    <location>
        <position position="286"/>
    </location>
    <ligand>
        <name>Mg(2+)</name>
        <dbReference type="ChEBI" id="CHEBI:18420"/>
    </ligand>
</feature>
<feature type="binding site" evidence="2">
    <location>
        <position position="288"/>
    </location>
    <ligand>
        <name>Mg(2+)</name>
        <dbReference type="ChEBI" id="CHEBI:18420"/>
    </ligand>
</feature>
<evidence type="ECO:0000250" key="1"/>
<evidence type="ECO:0000255" key="2">
    <source>
        <dbReference type="HAMAP-Rule" id="MF_00138"/>
    </source>
</evidence>
<evidence type="ECO:0000256" key="3">
    <source>
        <dbReference type="SAM" id="MobiDB-lite"/>
    </source>
</evidence>
<keyword id="KW-0067">ATP-binding</keyword>
<keyword id="KW-0436">Ligase</keyword>
<keyword id="KW-0460">Magnesium</keyword>
<keyword id="KW-0464">Manganese</keyword>
<keyword id="KW-0479">Metal-binding</keyword>
<keyword id="KW-0547">Nucleotide-binding</keyword>
<keyword id="KW-0658">Purine biosynthesis</keyword>
<protein>
    <recommendedName>
        <fullName evidence="2">Phosphoribosylamine--glycine ligase</fullName>
        <ecNumber evidence="2">6.3.4.13</ecNumber>
    </recommendedName>
    <alternativeName>
        <fullName evidence="2">GARS</fullName>
    </alternativeName>
    <alternativeName>
        <fullName evidence="2">Glycinamide ribonucleotide synthetase</fullName>
    </alternativeName>
    <alternativeName>
        <fullName evidence="2">Phosphoribosylglycinamide synthetase</fullName>
    </alternativeName>
</protein>
<proteinExistence type="inferred from homology"/>
<name>PUR2_VIBVU</name>
<dbReference type="EC" id="6.3.4.13" evidence="2"/>
<dbReference type="EMBL" id="AE016795">
    <property type="protein sequence ID" value="AAO09684.1"/>
    <property type="molecule type" value="Genomic_DNA"/>
</dbReference>
<dbReference type="RefSeq" id="WP_011079214.1">
    <property type="nucleotide sequence ID" value="NC_004459.3"/>
</dbReference>
<dbReference type="SMR" id="Q8DD07"/>
<dbReference type="KEGG" id="vvu:VV1_1226"/>
<dbReference type="HOGENOM" id="CLU_027420_3_1_6"/>
<dbReference type="UniPathway" id="UPA00074">
    <property type="reaction ID" value="UER00125"/>
</dbReference>
<dbReference type="Proteomes" id="UP000002275">
    <property type="component" value="Chromosome 1"/>
</dbReference>
<dbReference type="GO" id="GO:0005524">
    <property type="term" value="F:ATP binding"/>
    <property type="evidence" value="ECO:0007669"/>
    <property type="project" value="UniProtKB-KW"/>
</dbReference>
<dbReference type="GO" id="GO:0046872">
    <property type="term" value="F:metal ion binding"/>
    <property type="evidence" value="ECO:0007669"/>
    <property type="project" value="UniProtKB-KW"/>
</dbReference>
<dbReference type="GO" id="GO:0004637">
    <property type="term" value="F:phosphoribosylamine-glycine ligase activity"/>
    <property type="evidence" value="ECO:0007669"/>
    <property type="project" value="UniProtKB-UniRule"/>
</dbReference>
<dbReference type="GO" id="GO:0006189">
    <property type="term" value="P:'de novo' IMP biosynthetic process"/>
    <property type="evidence" value="ECO:0007669"/>
    <property type="project" value="UniProtKB-UniRule"/>
</dbReference>
<dbReference type="GO" id="GO:0009113">
    <property type="term" value="P:purine nucleobase biosynthetic process"/>
    <property type="evidence" value="ECO:0007669"/>
    <property type="project" value="InterPro"/>
</dbReference>
<dbReference type="FunFam" id="3.30.470.20:FF:000031">
    <property type="entry name" value="Phosphoribosylamine--glycine ligase"/>
    <property type="match status" value="1"/>
</dbReference>
<dbReference type="FunFam" id="3.40.50.20:FF:000006">
    <property type="entry name" value="Phosphoribosylamine--glycine ligase, chloroplastic"/>
    <property type="match status" value="1"/>
</dbReference>
<dbReference type="FunFam" id="3.30.1490.20:FF:000006">
    <property type="entry name" value="phosphoribosylamine--glycine ligase, chloroplastic-like"/>
    <property type="match status" value="1"/>
</dbReference>
<dbReference type="FunFam" id="3.90.600.10:FF:000001">
    <property type="entry name" value="Trifunctional purine biosynthetic protein adenosine-3"/>
    <property type="match status" value="1"/>
</dbReference>
<dbReference type="Gene3D" id="3.40.50.20">
    <property type="match status" value="1"/>
</dbReference>
<dbReference type="Gene3D" id="3.30.1490.20">
    <property type="entry name" value="ATP-grasp fold, A domain"/>
    <property type="match status" value="1"/>
</dbReference>
<dbReference type="Gene3D" id="3.30.470.20">
    <property type="entry name" value="ATP-grasp fold, B domain"/>
    <property type="match status" value="1"/>
</dbReference>
<dbReference type="Gene3D" id="3.90.600.10">
    <property type="entry name" value="Phosphoribosylglycinamide synthetase, C-terminal domain"/>
    <property type="match status" value="1"/>
</dbReference>
<dbReference type="HAMAP" id="MF_00138">
    <property type="entry name" value="GARS"/>
    <property type="match status" value="1"/>
</dbReference>
<dbReference type="InterPro" id="IPR011761">
    <property type="entry name" value="ATP-grasp"/>
</dbReference>
<dbReference type="InterPro" id="IPR013815">
    <property type="entry name" value="ATP_grasp_subdomain_1"/>
</dbReference>
<dbReference type="InterPro" id="IPR016185">
    <property type="entry name" value="PreATP-grasp_dom_sf"/>
</dbReference>
<dbReference type="InterPro" id="IPR020561">
    <property type="entry name" value="PRibGlycinamid_synth_ATP-grasp"/>
</dbReference>
<dbReference type="InterPro" id="IPR000115">
    <property type="entry name" value="PRibGlycinamide_synth"/>
</dbReference>
<dbReference type="InterPro" id="IPR020560">
    <property type="entry name" value="PRibGlycinamide_synth_C-dom"/>
</dbReference>
<dbReference type="InterPro" id="IPR037123">
    <property type="entry name" value="PRibGlycinamide_synth_C_sf"/>
</dbReference>
<dbReference type="InterPro" id="IPR020559">
    <property type="entry name" value="PRibGlycinamide_synth_CS"/>
</dbReference>
<dbReference type="InterPro" id="IPR020562">
    <property type="entry name" value="PRibGlycinamide_synth_N"/>
</dbReference>
<dbReference type="InterPro" id="IPR011054">
    <property type="entry name" value="Rudment_hybrid_motif"/>
</dbReference>
<dbReference type="NCBIfam" id="TIGR00877">
    <property type="entry name" value="purD"/>
    <property type="match status" value="1"/>
</dbReference>
<dbReference type="PANTHER" id="PTHR43472">
    <property type="entry name" value="PHOSPHORIBOSYLAMINE--GLYCINE LIGASE"/>
    <property type="match status" value="1"/>
</dbReference>
<dbReference type="PANTHER" id="PTHR43472:SF1">
    <property type="entry name" value="PHOSPHORIBOSYLAMINE--GLYCINE LIGASE, CHLOROPLASTIC"/>
    <property type="match status" value="1"/>
</dbReference>
<dbReference type="Pfam" id="PF01071">
    <property type="entry name" value="GARS_A"/>
    <property type="match status" value="1"/>
</dbReference>
<dbReference type="Pfam" id="PF02843">
    <property type="entry name" value="GARS_C"/>
    <property type="match status" value="1"/>
</dbReference>
<dbReference type="Pfam" id="PF02844">
    <property type="entry name" value="GARS_N"/>
    <property type="match status" value="1"/>
</dbReference>
<dbReference type="SMART" id="SM01209">
    <property type="entry name" value="GARS_A"/>
    <property type="match status" value="1"/>
</dbReference>
<dbReference type="SMART" id="SM01210">
    <property type="entry name" value="GARS_C"/>
    <property type="match status" value="1"/>
</dbReference>
<dbReference type="SUPFAM" id="SSF56059">
    <property type="entry name" value="Glutathione synthetase ATP-binding domain-like"/>
    <property type="match status" value="1"/>
</dbReference>
<dbReference type="SUPFAM" id="SSF52440">
    <property type="entry name" value="PreATP-grasp domain"/>
    <property type="match status" value="1"/>
</dbReference>
<dbReference type="SUPFAM" id="SSF51246">
    <property type="entry name" value="Rudiment single hybrid motif"/>
    <property type="match status" value="1"/>
</dbReference>
<dbReference type="PROSITE" id="PS50975">
    <property type="entry name" value="ATP_GRASP"/>
    <property type="match status" value="1"/>
</dbReference>
<dbReference type="PROSITE" id="PS00184">
    <property type="entry name" value="GARS"/>
    <property type="match status" value="1"/>
</dbReference>
<accession>Q8DD07</accession>
<comment type="catalytic activity">
    <reaction evidence="2">
        <text>5-phospho-beta-D-ribosylamine + glycine + ATP = N(1)-(5-phospho-beta-D-ribosyl)glycinamide + ADP + phosphate + H(+)</text>
        <dbReference type="Rhea" id="RHEA:17453"/>
        <dbReference type="ChEBI" id="CHEBI:15378"/>
        <dbReference type="ChEBI" id="CHEBI:30616"/>
        <dbReference type="ChEBI" id="CHEBI:43474"/>
        <dbReference type="ChEBI" id="CHEBI:57305"/>
        <dbReference type="ChEBI" id="CHEBI:58681"/>
        <dbReference type="ChEBI" id="CHEBI:143788"/>
        <dbReference type="ChEBI" id="CHEBI:456216"/>
        <dbReference type="EC" id="6.3.4.13"/>
    </reaction>
</comment>
<comment type="cofactor">
    <cofactor evidence="1">
        <name>Mg(2+)</name>
        <dbReference type="ChEBI" id="CHEBI:18420"/>
    </cofactor>
    <cofactor evidence="1">
        <name>Mn(2+)</name>
        <dbReference type="ChEBI" id="CHEBI:29035"/>
    </cofactor>
    <text evidence="1">Binds 1 Mg(2+) or Mn(2+) ion per subunit.</text>
</comment>
<comment type="pathway">
    <text evidence="2">Purine metabolism; IMP biosynthesis via de novo pathway; N(1)-(5-phospho-D-ribosyl)glycinamide from 5-phospho-alpha-D-ribose 1-diphosphate: step 2/2.</text>
</comment>
<comment type="similarity">
    <text evidence="2">Belongs to the GARS family.</text>
</comment>